<dbReference type="EC" id="3.4.24.-"/>
<dbReference type="EMBL" id="ABSU01000002">
    <property type="protein sequence ID" value="EFE36378.1"/>
    <property type="molecule type" value="Genomic_DNA"/>
</dbReference>
<dbReference type="RefSeq" id="XP_003017023.1">
    <property type="nucleotide sequence ID" value="XM_003016977.1"/>
</dbReference>
<dbReference type="SMR" id="D4ALW9"/>
<dbReference type="STRING" id="663331.D4ALW9"/>
<dbReference type="GeneID" id="9526744"/>
<dbReference type="KEGG" id="abe:ARB_05317"/>
<dbReference type="eggNOG" id="ENOG502RYKG">
    <property type="taxonomic scope" value="Eukaryota"/>
</dbReference>
<dbReference type="HOGENOM" id="CLU_048726_0_0_1"/>
<dbReference type="OMA" id="ATWANDP"/>
<dbReference type="OrthoDB" id="536211at2759"/>
<dbReference type="Proteomes" id="UP000008866">
    <property type="component" value="Unassembled WGS sequence"/>
</dbReference>
<dbReference type="GO" id="GO:0005576">
    <property type="term" value="C:extracellular region"/>
    <property type="evidence" value="ECO:0007669"/>
    <property type="project" value="UniProtKB-SubCell"/>
</dbReference>
<dbReference type="GO" id="GO:0046872">
    <property type="term" value="F:metal ion binding"/>
    <property type="evidence" value="ECO:0007669"/>
    <property type="project" value="UniProtKB-KW"/>
</dbReference>
<dbReference type="GO" id="GO:0008237">
    <property type="term" value="F:metallopeptidase activity"/>
    <property type="evidence" value="ECO:0007669"/>
    <property type="project" value="UniProtKB-KW"/>
</dbReference>
<dbReference type="GO" id="GO:0006508">
    <property type="term" value="P:proteolysis"/>
    <property type="evidence" value="ECO:0007669"/>
    <property type="project" value="UniProtKB-KW"/>
</dbReference>
<dbReference type="CDD" id="cd04275">
    <property type="entry name" value="ZnMc_pappalysin_like"/>
    <property type="match status" value="1"/>
</dbReference>
<dbReference type="Gene3D" id="3.40.390.10">
    <property type="entry name" value="Collagenase (Catalytic Domain)"/>
    <property type="match status" value="1"/>
</dbReference>
<dbReference type="InterPro" id="IPR024079">
    <property type="entry name" value="MetalloPept_cat_dom_sf"/>
</dbReference>
<dbReference type="InterPro" id="IPR008754">
    <property type="entry name" value="Peptidase_M43"/>
</dbReference>
<dbReference type="PANTHER" id="PTHR47466">
    <property type="match status" value="1"/>
</dbReference>
<dbReference type="PANTHER" id="PTHR47466:SF1">
    <property type="entry name" value="METALLOPROTEASE MEP1 (AFU_ORTHOLOGUE AFUA_1G07730)-RELATED"/>
    <property type="match status" value="1"/>
</dbReference>
<dbReference type="Pfam" id="PF05572">
    <property type="entry name" value="Peptidase_M43"/>
    <property type="match status" value="1"/>
</dbReference>
<dbReference type="SUPFAM" id="SSF55486">
    <property type="entry name" value="Metalloproteases ('zincins'), catalytic domain"/>
    <property type="match status" value="1"/>
</dbReference>
<dbReference type="PROSITE" id="PS00142">
    <property type="entry name" value="ZINC_PROTEASE"/>
    <property type="match status" value="1"/>
</dbReference>
<name>MEP6_ARTBC</name>
<comment type="function">
    <text evidence="1">Secreted metalloproteinase that allows assimilation of proteinaceous substrates. Plays a pivotal role as a pathogenicity determinant during infections and contributes to the ability of the pathogen to persist within the mammalian host (By similarity).</text>
</comment>
<comment type="subcellular location">
    <subcellularLocation>
        <location evidence="4">Secreted</location>
    </subcellularLocation>
</comment>
<comment type="similarity">
    <text evidence="5">Belongs to the peptidase M43B family.</text>
</comment>
<protein>
    <recommendedName>
        <fullName>Extracellular metalloprotease ARB_05317</fullName>
        <ecNumber>3.4.24.-</ecNumber>
    </recommendedName>
</protein>
<reference key="1">
    <citation type="journal article" date="2011" name="Genome Biol.">
        <title>Comparative and functional genomics provide insights into the pathogenicity of dermatophytic fungi.</title>
        <authorList>
            <person name="Burmester A."/>
            <person name="Shelest E."/>
            <person name="Gloeckner G."/>
            <person name="Heddergott C."/>
            <person name="Schindler S."/>
            <person name="Staib P."/>
            <person name="Heidel A."/>
            <person name="Felder M."/>
            <person name="Petzold A."/>
            <person name="Szafranski K."/>
            <person name="Feuermann M."/>
            <person name="Pedruzzi I."/>
            <person name="Priebe S."/>
            <person name="Groth M."/>
            <person name="Winkler R."/>
            <person name="Li W."/>
            <person name="Kniemeyer O."/>
            <person name="Schroeckh V."/>
            <person name="Hertweck C."/>
            <person name="Hube B."/>
            <person name="White T.C."/>
            <person name="Platzer M."/>
            <person name="Guthke R."/>
            <person name="Heitman J."/>
            <person name="Woestemeyer J."/>
            <person name="Zipfel P.F."/>
            <person name="Monod M."/>
            <person name="Brakhage A.A."/>
        </authorList>
    </citation>
    <scope>NUCLEOTIDE SEQUENCE [LARGE SCALE GENOMIC DNA]</scope>
    <scope>IDENTIFICATION BY MASS SPECTROMETRY</scope>
    <scope>SUBCELLULAR LOCATION</scope>
    <source>
        <strain>ATCC MYA-4681 / CBS 112371</strain>
    </source>
</reference>
<feature type="signal peptide" evidence="2">
    <location>
        <begin position="1"/>
        <end position="19"/>
    </location>
</feature>
<feature type="chain" id="PRO_0000407210" description="Extracellular metalloprotease ARB_05317">
    <location>
        <begin position="20"/>
        <end position="271"/>
    </location>
</feature>
<feature type="active site" evidence="3">
    <location>
        <position position="186"/>
    </location>
</feature>
<feature type="binding site" evidence="3">
    <location>
        <position position="185"/>
    </location>
    <ligand>
        <name>Zn(2+)</name>
        <dbReference type="ChEBI" id="CHEBI:29105"/>
        <note>catalytic</note>
    </ligand>
</feature>
<feature type="binding site" evidence="3">
    <location>
        <position position="189"/>
    </location>
    <ligand>
        <name>Zn(2+)</name>
        <dbReference type="ChEBI" id="CHEBI:29105"/>
        <note>catalytic</note>
    </ligand>
</feature>
<feature type="glycosylation site" description="N-linked (GlcNAc...) asparagine" evidence="2">
    <location>
        <position position="136"/>
    </location>
</feature>
<feature type="glycosylation site" description="N-linked (GlcNAc...) asparagine" evidence="2">
    <location>
        <position position="200"/>
    </location>
</feature>
<feature type="disulfide bond" evidence="1">
    <location>
        <begin position="222"/>
        <end position="248"/>
    </location>
</feature>
<accession>D4ALW9</accession>
<organism>
    <name type="scientific">Arthroderma benhamiae (strain ATCC MYA-4681 / CBS 112371)</name>
    <name type="common">Trichophyton mentagrophytes</name>
    <dbReference type="NCBI Taxonomy" id="663331"/>
    <lineage>
        <taxon>Eukaryota</taxon>
        <taxon>Fungi</taxon>
        <taxon>Dikarya</taxon>
        <taxon>Ascomycota</taxon>
        <taxon>Pezizomycotina</taxon>
        <taxon>Eurotiomycetes</taxon>
        <taxon>Eurotiomycetidae</taxon>
        <taxon>Onygenales</taxon>
        <taxon>Arthrodermataceae</taxon>
        <taxon>Trichophyton</taxon>
    </lineage>
</organism>
<keyword id="KW-1015">Disulfide bond</keyword>
<keyword id="KW-0325">Glycoprotein</keyword>
<keyword id="KW-0378">Hydrolase</keyword>
<keyword id="KW-0479">Metal-binding</keyword>
<keyword id="KW-0482">Metalloprotease</keyword>
<keyword id="KW-0645">Protease</keyword>
<keyword id="KW-1185">Reference proteome</keyword>
<keyword id="KW-0964">Secreted</keyword>
<keyword id="KW-0732">Signal</keyword>
<keyword id="KW-0843">Virulence</keyword>
<keyword id="KW-0862">Zinc</keyword>
<proteinExistence type="evidence at protein level"/>
<sequence>MRFSVLLTGLAAAGSIATAERTCGAVPPRAYEKEFTEALNSLSPEAASADLTAGITIDTYLHVLTSGQTGNIPDSQLQAQINAMNQHYSQAGVQFKLVKATRTDNANWASGRDEAGMKKALHMGTYSSLNIYFIPNLSSGLLGICYFPRANPSQTTIIMDGCMVRSGTVPGGETTNYNQGKTATHEVGHFLGLYHVFSENGSCVDADMVADTPAQSKKTSGCPSSQDSCPGGGVDSIHNYMDYSYDVCMNQFTPGQANRIAQSWRAFRAGH</sequence>
<evidence type="ECO:0000250" key="1"/>
<evidence type="ECO:0000255" key="2"/>
<evidence type="ECO:0000255" key="3">
    <source>
        <dbReference type="PROSITE-ProRule" id="PRU10095"/>
    </source>
</evidence>
<evidence type="ECO:0000269" key="4">
    <source>
    </source>
</evidence>
<evidence type="ECO:0000305" key="5"/>
<gene>
    <name type="ORF">ARB_05317</name>
</gene>